<comment type="function">
    <text evidence="1">Peptide chain release factor 2 directs the termination of translation in response to the peptide chain termination codons UGA and UAA.</text>
</comment>
<comment type="subcellular location">
    <subcellularLocation>
        <location evidence="1">Cytoplasm</location>
    </subcellularLocation>
</comment>
<comment type="PTM">
    <text evidence="1">Methylated by PrmC. Methylation increases the termination efficiency of RF2.</text>
</comment>
<comment type="similarity">
    <text evidence="1">Belongs to the prokaryotic/mitochondrial release factor family.</text>
</comment>
<evidence type="ECO:0000255" key="1">
    <source>
        <dbReference type="HAMAP-Rule" id="MF_00094"/>
    </source>
</evidence>
<accession>A0QJS1</accession>
<dbReference type="EMBL" id="CP000479">
    <property type="protein sequence ID" value="ABK69191.1"/>
    <property type="molecule type" value="Genomic_DNA"/>
</dbReference>
<dbReference type="RefSeq" id="WP_011725809.1">
    <property type="nucleotide sequence ID" value="NC_008595.1"/>
</dbReference>
<dbReference type="SMR" id="A0QJS1"/>
<dbReference type="GeneID" id="75271489"/>
<dbReference type="KEGG" id="mav:MAV_4006"/>
<dbReference type="HOGENOM" id="CLU_036856_6_0_11"/>
<dbReference type="Proteomes" id="UP000001574">
    <property type="component" value="Chromosome"/>
</dbReference>
<dbReference type="GO" id="GO:0005737">
    <property type="term" value="C:cytoplasm"/>
    <property type="evidence" value="ECO:0007669"/>
    <property type="project" value="UniProtKB-SubCell"/>
</dbReference>
<dbReference type="GO" id="GO:0016149">
    <property type="term" value="F:translation release factor activity, codon specific"/>
    <property type="evidence" value="ECO:0007669"/>
    <property type="project" value="UniProtKB-UniRule"/>
</dbReference>
<dbReference type="FunFam" id="3.30.160.20:FF:000010">
    <property type="entry name" value="Peptide chain release factor 2"/>
    <property type="match status" value="1"/>
</dbReference>
<dbReference type="Gene3D" id="3.30.160.20">
    <property type="match status" value="1"/>
</dbReference>
<dbReference type="Gene3D" id="3.30.70.1660">
    <property type="match status" value="1"/>
</dbReference>
<dbReference type="Gene3D" id="1.20.58.410">
    <property type="entry name" value="Release factor"/>
    <property type="match status" value="1"/>
</dbReference>
<dbReference type="HAMAP" id="MF_00094">
    <property type="entry name" value="Rel_fac_2"/>
    <property type="match status" value="1"/>
</dbReference>
<dbReference type="InterPro" id="IPR005139">
    <property type="entry name" value="PCRF"/>
</dbReference>
<dbReference type="InterPro" id="IPR000352">
    <property type="entry name" value="Pep_chain_release_fac_I"/>
</dbReference>
<dbReference type="InterPro" id="IPR045853">
    <property type="entry name" value="Pep_chain_release_fac_I_sf"/>
</dbReference>
<dbReference type="InterPro" id="IPR004374">
    <property type="entry name" value="PrfB"/>
</dbReference>
<dbReference type="NCBIfam" id="TIGR00020">
    <property type="entry name" value="prfB"/>
    <property type="match status" value="1"/>
</dbReference>
<dbReference type="PANTHER" id="PTHR43116:SF3">
    <property type="entry name" value="CLASS I PEPTIDE CHAIN RELEASE FACTOR"/>
    <property type="match status" value="1"/>
</dbReference>
<dbReference type="PANTHER" id="PTHR43116">
    <property type="entry name" value="PEPTIDE CHAIN RELEASE FACTOR 2"/>
    <property type="match status" value="1"/>
</dbReference>
<dbReference type="Pfam" id="PF03462">
    <property type="entry name" value="PCRF"/>
    <property type="match status" value="1"/>
</dbReference>
<dbReference type="Pfam" id="PF00472">
    <property type="entry name" value="RF-1"/>
    <property type="match status" value="1"/>
</dbReference>
<dbReference type="SMART" id="SM00937">
    <property type="entry name" value="PCRF"/>
    <property type="match status" value="1"/>
</dbReference>
<dbReference type="SUPFAM" id="SSF75620">
    <property type="entry name" value="Release factor"/>
    <property type="match status" value="1"/>
</dbReference>
<dbReference type="PROSITE" id="PS00745">
    <property type="entry name" value="RF_PROK_I"/>
    <property type="match status" value="1"/>
</dbReference>
<feature type="chain" id="PRO_1000004998" description="Peptide chain release factor 2">
    <location>
        <begin position="1"/>
        <end position="370"/>
    </location>
</feature>
<feature type="modified residue" description="N5-methylglutamine" evidence="1">
    <location>
        <position position="252"/>
    </location>
</feature>
<reference key="1">
    <citation type="submission" date="2006-10" db="EMBL/GenBank/DDBJ databases">
        <authorList>
            <person name="Fleischmann R.D."/>
            <person name="Dodson R.J."/>
            <person name="Haft D.H."/>
            <person name="Merkel J.S."/>
            <person name="Nelson W.C."/>
            <person name="Fraser C.M."/>
        </authorList>
    </citation>
    <scope>NUCLEOTIDE SEQUENCE [LARGE SCALE GENOMIC DNA]</scope>
    <source>
        <strain>104</strain>
    </source>
</reference>
<sequence>MEPDRQADIAALDSTLTTVERVLDVDGLRARIEKLEHEASDPQLWDDQARAQRVTSELSHAQGELRRIEELRARLDDLPVLYELAAEEGEGAAEALAEADAELKALRADIEATEVRTLLSGEYDEREALVTIRSGAGGVDAADWAEMLMRMYIRWAEQHKYPVEVFDTSYAEEAGIKSATFAVHAPFAYGTLSVEQGTHRLVRISPFDNQSRRQTSFAEVEVLPVVETTDHIDIPEGDVRVDVYRSSGPGGQSVNTTDSAVRLTHIPTGIVVTCQNEKSQLQNKISAMRVLQAKLLERKRSEERAELDALKGEGGSSWGNQMRSYVLHPYQMVKDLRTEYEVGNPAAVLDGDIDGFLEAGIRWRNRKDDE</sequence>
<protein>
    <recommendedName>
        <fullName evidence="1">Peptide chain release factor 2</fullName>
        <shortName evidence="1">RF-2</shortName>
    </recommendedName>
</protein>
<organism>
    <name type="scientific">Mycobacterium avium (strain 104)</name>
    <dbReference type="NCBI Taxonomy" id="243243"/>
    <lineage>
        <taxon>Bacteria</taxon>
        <taxon>Bacillati</taxon>
        <taxon>Actinomycetota</taxon>
        <taxon>Actinomycetes</taxon>
        <taxon>Mycobacteriales</taxon>
        <taxon>Mycobacteriaceae</taxon>
        <taxon>Mycobacterium</taxon>
        <taxon>Mycobacterium avium complex (MAC)</taxon>
    </lineage>
</organism>
<gene>
    <name evidence="1" type="primary">prfB</name>
    <name type="ordered locus">MAV_4006</name>
</gene>
<proteinExistence type="inferred from homology"/>
<name>RF2_MYCA1</name>
<keyword id="KW-0963">Cytoplasm</keyword>
<keyword id="KW-0488">Methylation</keyword>
<keyword id="KW-0648">Protein biosynthesis</keyword>